<reference key="1">
    <citation type="journal article" date="2003" name="Genome Res.">
        <title>Genome sequence of an M3 strain of Streptococcus pyogenes reveals a large-scale genomic rearrangement in invasive strains and new insights into phage evolution.</title>
        <authorList>
            <person name="Nakagawa I."/>
            <person name="Kurokawa K."/>
            <person name="Yamashita A."/>
            <person name="Nakata M."/>
            <person name="Tomiyasu Y."/>
            <person name="Okahashi N."/>
            <person name="Kawabata S."/>
            <person name="Yamazaki K."/>
            <person name="Shiba T."/>
            <person name="Yasunaga T."/>
            <person name="Hayashi H."/>
            <person name="Hattori M."/>
            <person name="Hamada S."/>
        </authorList>
    </citation>
    <scope>NUCLEOTIDE SEQUENCE [LARGE SCALE GENOMIC DNA]</scope>
    <source>
        <strain>SSI-1</strain>
    </source>
</reference>
<protein>
    <recommendedName>
        <fullName evidence="1">Protein NrdI</fullName>
    </recommendedName>
</protein>
<comment type="function">
    <text evidence="1">Probably involved in ribonucleotide reductase function.</text>
</comment>
<comment type="similarity">
    <text evidence="1">Belongs to the NrdI family.</text>
</comment>
<accession>P0DC71</accession>
<accession>P65550</accession>
<accession>Q8P296</accession>
<name>NRDI_STRPQ</name>
<feature type="chain" id="PRO_0000411423" description="Protein NrdI">
    <location>
        <begin position="1"/>
        <end position="162"/>
    </location>
</feature>
<gene>
    <name evidence="1" type="primary">nrdI</name>
    <name type="ordered locus">SPs1555</name>
</gene>
<evidence type="ECO:0000255" key="1">
    <source>
        <dbReference type="HAMAP-Rule" id="MF_00128"/>
    </source>
</evidence>
<sequence>MAELIIVYFSSKSNNTHRFVQKLGLPAQRIPVDNRPLEVSTHYLLIVPTYAAGGSDAKGAVPKQVIRFLNNPNNRKHCKGVISSGNTNFGDTFALAGPIISQKLQVPLLHQFELLGTATDVKKVQAIFARLKHHTHDKQKQTNNLITERTHPCHKPMRHTSH</sequence>
<organism>
    <name type="scientific">Streptococcus pyogenes serotype M3 (strain SSI-1)</name>
    <dbReference type="NCBI Taxonomy" id="193567"/>
    <lineage>
        <taxon>Bacteria</taxon>
        <taxon>Bacillati</taxon>
        <taxon>Bacillota</taxon>
        <taxon>Bacilli</taxon>
        <taxon>Lactobacillales</taxon>
        <taxon>Streptococcaceae</taxon>
        <taxon>Streptococcus</taxon>
    </lineage>
</organism>
<dbReference type="EMBL" id="BA000034">
    <property type="protein sequence ID" value="BAC64650.1"/>
    <property type="molecule type" value="Genomic_DNA"/>
</dbReference>
<dbReference type="RefSeq" id="WP_002990870.1">
    <property type="nucleotide sequence ID" value="NC_004606.1"/>
</dbReference>
<dbReference type="SMR" id="P0DC71"/>
<dbReference type="GeneID" id="69901324"/>
<dbReference type="KEGG" id="sps:SPs1555"/>
<dbReference type="HOGENOM" id="CLU_114845_0_0_9"/>
<dbReference type="GO" id="GO:0010181">
    <property type="term" value="F:FMN binding"/>
    <property type="evidence" value="ECO:0007669"/>
    <property type="project" value="InterPro"/>
</dbReference>
<dbReference type="GO" id="GO:0036211">
    <property type="term" value="P:protein modification process"/>
    <property type="evidence" value="ECO:0007669"/>
    <property type="project" value="InterPro"/>
</dbReference>
<dbReference type="Gene3D" id="3.40.50.360">
    <property type="match status" value="1"/>
</dbReference>
<dbReference type="HAMAP" id="MF_00128">
    <property type="entry name" value="NrdI"/>
    <property type="match status" value="1"/>
</dbReference>
<dbReference type="InterPro" id="IPR029039">
    <property type="entry name" value="Flavoprotein-like_sf"/>
</dbReference>
<dbReference type="InterPro" id="IPR020852">
    <property type="entry name" value="RNR_Ib_NrdI_bac"/>
</dbReference>
<dbReference type="InterPro" id="IPR004465">
    <property type="entry name" value="RNR_NrdI"/>
</dbReference>
<dbReference type="NCBIfam" id="TIGR00333">
    <property type="entry name" value="nrdI"/>
    <property type="match status" value="1"/>
</dbReference>
<dbReference type="PANTHER" id="PTHR37297">
    <property type="entry name" value="PROTEIN NRDI"/>
    <property type="match status" value="1"/>
</dbReference>
<dbReference type="PANTHER" id="PTHR37297:SF1">
    <property type="entry name" value="PROTEIN NRDI"/>
    <property type="match status" value="1"/>
</dbReference>
<dbReference type="Pfam" id="PF07972">
    <property type="entry name" value="Flavodoxin_NdrI"/>
    <property type="match status" value="1"/>
</dbReference>
<dbReference type="PIRSF" id="PIRSF005087">
    <property type="entry name" value="NrdI"/>
    <property type="match status" value="1"/>
</dbReference>
<dbReference type="SUPFAM" id="SSF52218">
    <property type="entry name" value="Flavoproteins"/>
    <property type="match status" value="1"/>
</dbReference>
<proteinExistence type="inferred from homology"/>